<feature type="chain" id="PRO_1000140021" description="Multifunctional CCA protein">
    <location>
        <begin position="1"/>
        <end position="411"/>
    </location>
</feature>
<feature type="domain" description="HD" evidence="1">
    <location>
        <begin position="228"/>
        <end position="333"/>
    </location>
</feature>
<feature type="binding site" evidence="1">
    <location>
        <position position="8"/>
    </location>
    <ligand>
        <name>ATP</name>
        <dbReference type="ChEBI" id="CHEBI:30616"/>
    </ligand>
</feature>
<feature type="binding site" evidence="1">
    <location>
        <position position="8"/>
    </location>
    <ligand>
        <name>CTP</name>
        <dbReference type="ChEBI" id="CHEBI:37563"/>
    </ligand>
</feature>
<feature type="binding site" evidence="1">
    <location>
        <position position="11"/>
    </location>
    <ligand>
        <name>ATP</name>
        <dbReference type="ChEBI" id="CHEBI:30616"/>
    </ligand>
</feature>
<feature type="binding site" evidence="1">
    <location>
        <position position="11"/>
    </location>
    <ligand>
        <name>CTP</name>
        <dbReference type="ChEBI" id="CHEBI:37563"/>
    </ligand>
</feature>
<feature type="binding site" evidence="1">
    <location>
        <position position="21"/>
    </location>
    <ligand>
        <name>Mg(2+)</name>
        <dbReference type="ChEBI" id="CHEBI:18420"/>
    </ligand>
</feature>
<feature type="binding site" evidence="1">
    <location>
        <position position="23"/>
    </location>
    <ligand>
        <name>Mg(2+)</name>
        <dbReference type="ChEBI" id="CHEBI:18420"/>
    </ligand>
</feature>
<feature type="binding site" evidence="1">
    <location>
        <position position="91"/>
    </location>
    <ligand>
        <name>ATP</name>
        <dbReference type="ChEBI" id="CHEBI:30616"/>
    </ligand>
</feature>
<feature type="binding site" evidence="1">
    <location>
        <position position="91"/>
    </location>
    <ligand>
        <name>CTP</name>
        <dbReference type="ChEBI" id="CHEBI:37563"/>
    </ligand>
</feature>
<feature type="binding site" evidence="1">
    <location>
        <position position="137"/>
    </location>
    <ligand>
        <name>ATP</name>
        <dbReference type="ChEBI" id="CHEBI:30616"/>
    </ligand>
</feature>
<feature type="binding site" evidence="1">
    <location>
        <position position="137"/>
    </location>
    <ligand>
        <name>CTP</name>
        <dbReference type="ChEBI" id="CHEBI:37563"/>
    </ligand>
</feature>
<feature type="binding site" evidence="1">
    <location>
        <position position="140"/>
    </location>
    <ligand>
        <name>ATP</name>
        <dbReference type="ChEBI" id="CHEBI:30616"/>
    </ligand>
</feature>
<feature type="binding site" evidence="1">
    <location>
        <position position="140"/>
    </location>
    <ligand>
        <name>CTP</name>
        <dbReference type="ChEBI" id="CHEBI:37563"/>
    </ligand>
</feature>
<keyword id="KW-0067">ATP-binding</keyword>
<keyword id="KW-0378">Hydrolase</keyword>
<keyword id="KW-0460">Magnesium</keyword>
<keyword id="KW-0479">Metal-binding</keyword>
<keyword id="KW-0511">Multifunctional enzyme</keyword>
<keyword id="KW-0533">Nickel</keyword>
<keyword id="KW-0547">Nucleotide-binding</keyword>
<keyword id="KW-0548">Nucleotidyltransferase</keyword>
<keyword id="KW-0692">RNA repair</keyword>
<keyword id="KW-0694">RNA-binding</keyword>
<keyword id="KW-0808">Transferase</keyword>
<keyword id="KW-0819">tRNA processing</keyword>
<evidence type="ECO:0000255" key="1">
    <source>
        <dbReference type="HAMAP-Rule" id="MF_01261"/>
    </source>
</evidence>
<protein>
    <recommendedName>
        <fullName evidence="1">Multifunctional CCA protein</fullName>
    </recommendedName>
    <domain>
        <recommendedName>
            <fullName evidence="1">CCA-adding enzyme</fullName>
            <ecNumber evidence="1">2.7.7.72</ecNumber>
        </recommendedName>
        <alternativeName>
            <fullName evidence="1">CCA tRNA nucleotidyltransferase</fullName>
        </alternativeName>
        <alternativeName>
            <fullName evidence="1">tRNA CCA-pyrophosphorylase</fullName>
        </alternativeName>
        <alternativeName>
            <fullName evidence="1">tRNA adenylyl-/cytidylyl-transferase</fullName>
        </alternativeName>
        <alternativeName>
            <fullName evidence="1">tRNA nucleotidyltransferase</fullName>
        </alternativeName>
        <alternativeName>
            <fullName evidence="1">tRNA-NT</fullName>
        </alternativeName>
    </domain>
    <domain>
        <recommendedName>
            <fullName evidence="1">2'-nucleotidase</fullName>
            <ecNumber evidence="1">3.1.3.-</ecNumber>
        </recommendedName>
    </domain>
    <domain>
        <recommendedName>
            <fullName evidence="1">2',3'-cyclic phosphodiesterase</fullName>
            <ecNumber evidence="1">3.1.4.-</ecNumber>
        </recommendedName>
    </domain>
    <domain>
        <recommendedName>
            <fullName evidence="1">Phosphatase</fullName>
            <ecNumber evidence="1">3.1.3.-</ecNumber>
        </recommendedName>
    </domain>
</protein>
<comment type="function">
    <text evidence="1">Catalyzes the addition and repair of the essential 3'-terminal CCA sequence in tRNAs without using a nucleic acid template. Adds these three nucleotides in the order of C, C, and A to the tRNA nucleotide-73, using CTP and ATP as substrates and producing inorganic pyrophosphate. tRNA 3'-terminal CCA addition is required both for tRNA processing and repair. Also involved in tRNA surveillance by mediating tandem CCA addition to generate a CCACCA at the 3' terminus of unstable tRNAs. While stable tRNAs receive only 3'-terminal CCA, unstable tRNAs are marked with CCACCA and rapidly degraded.</text>
</comment>
<comment type="catalytic activity">
    <reaction evidence="1">
        <text>a tRNA precursor + 2 CTP + ATP = a tRNA with a 3' CCA end + 3 diphosphate</text>
        <dbReference type="Rhea" id="RHEA:14433"/>
        <dbReference type="Rhea" id="RHEA-COMP:10465"/>
        <dbReference type="Rhea" id="RHEA-COMP:10468"/>
        <dbReference type="ChEBI" id="CHEBI:30616"/>
        <dbReference type="ChEBI" id="CHEBI:33019"/>
        <dbReference type="ChEBI" id="CHEBI:37563"/>
        <dbReference type="ChEBI" id="CHEBI:74896"/>
        <dbReference type="ChEBI" id="CHEBI:83071"/>
        <dbReference type="EC" id="2.7.7.72"/>
    </reaction>
</comment>
<comment type="catalytic activity">
    <reaction evidence="1">
        <text>a tRNA with a 3' CCA end + 2 CTP + ATP = a tRNA with a 3' CCACCA end + 3 diphosphate</text>
        <dbReference type="Rhea" id="RHEA:76235"/>
        <dbReference type="Rhea" id="RHEA-COMP:10468"/>
        <dbReference type="Rhea" id="RHEA-COMP:18655"/>
        <dbReference type="ChEBI" id="CHEBI:30616"/>
        <dbReference type="ChEBI" id="CHEBI:33019"/>
        <dbReference type="ChEBI" id="CHEBI:37563"/>
        <dbReference type="ChEBI" id="CHEBI:83071"/>
        <dbReference type="ChEBI" id="CHEBI:195187"/>
    </reaction>
    <physiologicalReaction direction="left-to-right" evidence="1">
        <dbReference type="Rhea" id="RHEA:76236"/>
    </physiologicalReaction>
</comment>
<comment type="cofactor">
    <cofactor evidence="1">
        <name>Mg(2+)</name>
        <dbReference type="ChEBI" id="CHEBI:18420"/>
    </cofactor>
    <text evidence="1">Magnesium is required for nucleotidyltransferase activity.</text>
</comment>
<comment type="cofactor">
    <cofactor evidence="1">
        <name>Ni(2+)</name>
        <dbReference type="ChEBI" id="CHEBI:49786"/>
    </cofactor>
    <text evidence="1">Nickel for phosphatase activity.</text>
</comment>
<comment type="subunit">
    <text evidence="1">Monomer. Can also form homodimers and oligomers.</text>
</comment>
<comment type="domain">
    <text evidence="1">Comprises two domains: an N-terminal domain containing the nucleotidyltransferase activity and a C-terminal HD domain associated with both phosphodiesterase and phosphatase activities.</text>
</comment>
<comment type="miscellaneous">
    <text evidence="1">A single active site specifically recognizes both ATP and CTP and is responsible for their addition.</text>
</comment>
<comment type="similarity">
    <text evidence="1">Belongs to the tRNA nucleotidyltransferase/poly(A) polymerase family. Bacterial CCA-adding enzyme type 1 subfamily.</text>
</comment>
<organism>
    <name type="scientific">Actinobacillus pleuropneumoniae serotype 7 (strain AP76)</name>
    <dbReference type="NCBI Taxonomy" id="537457"/>
    <lineage>
        <taxon>Bacteria</taxon>
        <taxon>Pseudomonadati</taxon>
        <taxon>Pseudomonadota</taxon>
        <taxon>Gammaproteobacteria</taxon>
        <taxon>Pasteurellales</taxon>
        <taxon>Pasteurellaceae</taxon>
        <taxon>Actinobacillus</taxon>
    </lineage>
</organism>
<name>CCA_ACTP7</name>
<sequence>MQIYLVGGAVRDQLLNLPVKDRDYLVVGATPEQLLAQGYQQVGNDFPVFLHPKTKEEYALARQERKNGVGYNGFLCDFSPDVTLEQDLIRRDLTINAIAQDASGQIFDPYGGKQDLANRLLRHISPAFSEDPLRVLRVARFAARFHSLGFKIAPETVKLMQEMTACGELAHLTAERVWLETQKAFATDNPQIYFEVLREIGALAVLFPEFDRLFGVPQPEQHHPEIDSGVHTLLVIEQAKRLAKNAENPTALLWAALCHDLGKGLTEKDILPHHYGHEVKGVKPARELSNRLKVSTDVKDFAILVTEYHTHCHKMAELRPETVLKVFNALDIWRKPQRFCDFLLACEADARGRLGFENREYPQAELAKWYFKVAAQVDVQAVIQDGFEKKAIREELNKRRITAIKIIKPNV</sequence>
<proteinExistence type="inferred from homology"/>
<gene>
    <name evidence="1" type="primary">cca</name>
    <name type="ordered locus">APP7_0975</name>
</gene>
<dbReference type="EC" id="2.7.7.72" evidence="1"/>
<dbReference type="EC" id="3.1.3.-" evidence="1"/>
<dbReference type="EC" id="3.1.4.-" evidence="1"/>
<dbReference type="EMBL" id="CP001091">
    <property type="protein sequence ID" value="ACE61627.1"/>
    <property type="molecule type" value="Genomic_DNA"/>
</dbReference>
<dbReference type="RefSeq" id="WP_005597568.1">
    <property type="nucleotide sequence ID" value="NC_010939.1"/>
</dbReference>
<dbReference type="SMR" id="B3GXR2"/>
<dbReference type="KEGG" id="apa:APP7_0975"/>
<dbReference type="HOGENOM" id="CLU_015961_1_1_6"/>
<dbReference type="Proteomes" id="UP000001226">
    <property type="component" value="Chromosome"/>
</dbReference>
<dbReference type="GO" id="GO:0005524">
    <property type="term" value="F:ATP binding"/>
    <property type="evidence" value="ECO:0007669"/>
    <property type="project" value="UniProtKB-UniRule"/>
</dbReference>
<dbReference type="GO" id="GO:0004810">
    <property type="term" value="F:CCA tRNA nucleotidyltransferase activity"/>
    <property type="evidence" value="ECO:0007669"/>
    <property type="project" value="UniProtKB-UniRule"/>
</dbReference>
<dbReference type="GO" id="GO:0004112">
    <property type="term" value="F:cyclic-nucleotide phosphodiesterase activity"/>
    <property type="evidence" value="ECO:0007669"/>
    <property type="project" value="UniProtKB-UniRule"/>
</dbReference>
<dbReference type="GO" id="GO:0000287">
    <property type="term" value="F:magnesium ion binding"/>
    <property type="evidence" value="ECO:0007669"/>
    <property type="project" value="UniProtKB-UniRule"/>
</dbReference>
<dbReference type="GO" id="GO:0016791">
    <property type="term" value="F:phosphatase activity"/>
    <property type="evidence" value="ECO:0007669"/>
    <property type="project" value="UniProtKB-UniRule"/>
</dbReference>
<dbReference type="GO" id="GO:0000049">
    <property type="term" value="F:tRNA binding"/>
    <property type="evidence" value="ECO:0007669"/>
    <property type="project" value="UniProtKB-UniRule"/>
</dbReference>
<dbReference type="GO" id="GO:0042245">
    <property type="term" value="P:RNA repair"/>
    <property type="evidence" value="ECO:0007669"/>
    <property type="project" value="UniProtKB-KW"/>
</dbReference>
<dbReference type="GO" id="GO:0001680">
    <property type="term" value="P:tRNA 3'-terminal CCA addition"/>
    <property type="evidence" value="ECO:0007669"/>
    <property type="project" value="UniProtKB-UniRule"/>
</dbReference>
<dbReference type="CDD" id="cd00077">
    <property type="entry name" value="HDc"/>
    <property type="match status" value="1"/>
</dbReference>
<dbReference type="CDD" id="cd05398">
    <property type="entry name" value="NT_ClassII-CCAase"/>
    <property type="match status" value="1"/>
</dbReference>
<dbReference type="Gene3D" id="3.30.460.10">
    <property type="entry name" value="Beta Polymerase, domain 2"/>
    <property type="match status" value="1"/>
</dbReference>
<dbReference type="Gene3D" id="1.10.3090.10">
    <property type="entry name" value="cca-adding enzyme, domain 2"/>
    <property type="match status" value="1"/>
</dbReference>
<dbReference type="HAMAP" id="MF_01261">
    <property type="entry name" value="CCA_bact_type1"/>
    <property type="match status" value="1"/>
</dbReference>
<dbReference type="HAMAP" id="MF_01262">
    <property type="entry name" value="CCA_bact_type2"/>
    <property type="match status" value="1"/>
</dbReference>
<dbReference type="InterPro" id="IPR012006">
    <property type="entry name" value="CCA_bact"/>
</dbReference>
<dbReference type="InterPro" id="IPR003607">
    <property type="entry name" value="HD/PDEase_dom"/>
</dbReference>
<dbReference type="InterPro" id="IPR006674">
    <property type="entry name" value="HD_domain"/>
</dbReference>
<dbReference type="InterPro" id="IPR006675">
    <property type="entry name" value="HDIG_dom"/>
</dbReference>
<dbReference type="InterPro" id="IPR043519">
    <property type="entry name" value="NT_sf"/>
</dbReference>
<dbReference type="InterPro" id="IPR002646">
    <property type="entry name" value="PolA_pol_head_dom"/>
</dbReference>
<dbReference type="InterPro" id="IPR032828">
    <property type="entry name" value="PolyA_RNA-bd"/>
</dbReference>
<dbReference type="InterPro" id="IPR050124">
    <property type="entry name" value="tRNA_CCA-adding_enzyme"/>
</dbReference>
<dbReference type="NCBIfam" id="TIGR00277">
    <property type="entry name" value="HDIG"/>
    <property type="match status" value="1"/>
</dbReference>
<dbReference type="NCBIfam" id="NF008137">
    <property type="entry name" value="PRK10885.1"/>
    <property type="match status" value="1"/>
</dbReference>
<dbReference type="PANTHER" id="PTHR47545">
    <property type="entry name" value="MULTIFUNCTIONAL CCA PROTEIN"/>
    <property type="match status" value="1"/>
</dbReference>
<dbReference type="PANTHER" id="PTHR47545:SF1">
    <property type="entry name" value="MULTIFUNCTIONAL CCA PROTEIN"/>
    <property type="match status" value="1"/>
</dbReference>
<dbReference type="Pfam" id="PF01966">
    <property type="entry name" value="HD"/>
    <property type="match status" value="1"/>
</dbReference>
<dbReference type="Pfam" id="PF01743">
    <property type="entry name" value="PolyA_pol"/>
    <property type="match status" value="1"/>
</dbReference>
<dbReference type="Pfam" id="PF12627">
    <property type="entry name" value="PolyA_pol_RNAbd"/>
    <property type="match status" value="1"/>
</dbReference>
<dbReference type="PIRSF" id="PIRSF000813">
    <property type="entry name" value="CCA_bact"/>
    <property type="match status" value="1"/>
</dbReference>
<dbReference type="SUPFAM" id="SSF81301">
    <property type="entry name" value="Nucleotidyltransferase"/>
    <property type="match status" value="1"/>
</dbReference>
<dbReference type="SUPFAM" id="SSF81891">
    <property type="entry name" value="Poly A polymerase C-terminal region-like"/>
    <property type="match status" value="1"/>
</dbReference>
<dbReference type="PROSITE" id="PS51831">
    <property type="entry name" value="HD"/>
    <property type="match status" value="1"/>
</dbReference>
<accession>B3GXR2</accession>
<reference key="1">
    <citation type="submission" date="2008-06" db="EMBL/GenBank/DDBJ databases">
        <title>Genome and proteome analysis of A. pleuropneumoniae serotype 7.</title>
        <authorList>
            <person name="Linke B."/>
            <person name="Buettner F."/>
            <person name="Martinez-Arias R."/>
            <person name="Goesmann A."/>
            <person name="Baltes N."/>
            <person name="Tegetmeyer H."/>
            <person name="Singh M."/>
            <person name="Gerlach G.F."/>
        </authorList>
    </citation>
    <scope>NUCLEOTIDE SEQUENCE [LARGE SCALE GENOMIC DNA]</scope>
    <source>
        <strain>AP76</strain>
    </source>
</reference>